<feature type="chain" id="PRO_0000431009" description="Putative uncharacterized protein YER088C-A">
    <location>
        <begin position="1"/>
        <end position="107"/>
    </location>
</feature>
<feature type="region of interest" description="Disordered" evidence="1">
    <location>
        <begin position="86"/>
        <end position="107"/>
    </location>
</feature>
<organism>
    <name type="scientific">Saccharomyces cerevisiae (strain ATCC 204508 / S288c)</name>
    <name type="common">Baker's yeast</name>
    <dbReference type="NCBI Taxonomy" id="559292"/>
    <lineage>
        <taxon>Eukaryota</taxon>
        <taxon>Fungi</taxon>
        <taxon>Dikarya</taxon>
        <taxon>Ascomycota</taxon>
        <taxon>Saccharomycotina</taxon>
        <taxon>Saccharomycetes</taxon>
        <taxon>Saccharomycetales</taxon>
        <taxon>Saccharomycetaceae</taxon>
        <taxon>Saccharomyces</taxon>
    </lineage>
</organism>
<protein>
    <recommendedName>
        <fullName evidence="2">Putative uncharacterized protein YER088C-A</fullName>
    </recommendedName>
</protein>
<sequence length="107" mass="11926">MTRLPPIPRMTVTLTTRPAVPTCNEGSSILHYIYIPIYEPNEQKEKRRRKTPPEPRAYTTTTTIATNSRISGCSLTLEDGIHLRGKRAETARLPAATPQKRTGPARG</sequence>
<reference key="1">
    <citation type="journal article" date="1997" name="Nature">
        <title>The nucleotide sequence of Saccharomyces cerevisiae chromosome V.</title>
        <authorList>
            <person name="Dietrich F.S."/>
            <person name="Mulligan J.T."/>
            <person name="Hennessy K.M."/>
            <person name="Yelton M.A."/>
            <person name="Allen E."/>
            <person name="Araujo R."/>
            <person name="Aviles E."/>
            <person name="Berno A."/>
            <person name="Brennan T."/>
            <person name="Carpenter J."/>
            <person name="Chen E."/>
            <person name="Cherry J.M."/>
            <person name="Chung E."/>
            <person name="Duncan M."/>
            <person name="Guzman E."/>
            <person name="Hartzell G."/>
            <person name="Hunicke-Smith S."/>
            <person name="Hyman R.W."/>
            <person name="Kayser A."/>
            <person name="Komp C."/>
            <person name="Lashkari D."/>
            <person name="Lew H."/>
            <person name="Lin D."/>
            <person name="Mosedale D."/>
            <person name="Nakahara K."/>
            <person name="Namath A."/>
            <person name="Norgren R."/>
            <person name="Oefner P."/>
            <person name="Oh C."/>
            <person name="Petel F.X."/>
            <person name="Roberts D."/>
            <person name="Sehl P."/>
            <person name="Schramm S."/>
            <person name="Shogren T."/>
            <person name="Smith V."/>
            <person name="Taylor P."/>
            <person name="Wei Y."/>
            <person name="Botstein D."/>
            <person name="Davis R.W."/>
        </authorList>
    </citation>
    <scope>NUCLEOTIDE SEQUENCE [LARGE SCALE GENOMIC DNA]</scope>
    <source>
        <strain>ATCC 204508 / S288c</strain>
    </source>
</reference>
<reference key="2">
    <citation type="journal article" date="2014" name="G3 (Bethesda)">
        <title>The reference genome sequence of Saccharomyces cerevisiae: Then and now.</title>
        <authorList>
            <person name="Engel S.R."/>
            <person name="Dietrich F.S."/>
            <person name="Fisk D.G."/>
            <person name="Binkley G."/>
            <person name="Balakrishnan R."/>
            <person name="Costanzo M.C."/>
            <person name="Dwight S.S."/>
            <person name="Hitz B.C."/>
            <person name="Karra K."/>
            <person name="Nash R.S."/>
            <person name="Weng S."/>
            <person name="Wong E.D."/>
            <person name="Lloyd P."/>
            <person name="Skrzypek M.S."/>
            <person name="Miyasato S.R."/>
            <person name="Simison M."/>
            <person name="Cherry J.M."/>
        </authorList>
    </citation>
    <scope>GENOME REANNOTATION</scope>
    <source>
        <strain>ATCC 204508 / S288c</strain>
    </source>
</reference>
<proteinExistence type="uncertain"/>
<dbReference type="EMBL" id="KJ412236">
    <property type="protein sequence ID" value="AHX39279.1"/>
    <property type="molecule type" value="Genomic_DNA"/>
</dbReference>
<dbReference type="PaxDb" id="4932-YER088C-A"/>
<dbReference type="EnsemblFungi" id="YER088C-A_mRNA">
    <property type="protein sequence ID" value="YER088C-A"/>
    <property type="gene ID" value="YER088C-A"/>
</dbReference>
<dbReference type="AGR" id="SGD:S000028754"/>
<dbReference type="SGD" id="S000028754">
    <property type="gene designation" value="YER088C-A"/>
</dbReference>
<dbReference type="HOGENOM" id="CLU_2225276_0_0_1"/>
<dbReference type="OMA" id="YIPIYEP"/>
<accession>A0A023PXD3</accession>
<name>YE88A_YEAST</name>
<evidence type="ECO:0000256" key="1">
    <source>
        <dbReference type="SAM" id="MobiDB-lite"/>
    </source>
</evidence>
<evidence type="ECO:0000305" key="2"/>
<evidence type="ECO:0000305" key="3">
    <source>
    </source>
</evidence>
<evidence type="ECO:0000312" key="4">
    <source>
        <dbReference type="SGD" id="S000028754"/>
    </source>
</evidence>
<comment type="miscellaneous">
    <text evidence="2">Partially overlaps PTC2 and YER088W-B.</text>
</comment>
<comment type="caution">
    <text evidence="3">Product of a dubious gene prediction unlikely to encode a functional protein. Because of that it is not part of the S.cerevisiae S288c complete/reference proteome set.</text>
</comment>
<gene>
    <name evidence="4" type="ordered locus">YER088C-A</name>
</gene>